<accession>P67025</accession>
<accession>Q8XDN6</accession>
<evidence type="ECO:0000255" key="1">
    <source>
        <dbReference type="HAMAP-Rule" id="MF_00254"/>
    </source>
</evidence>
<protein>
    <recommendedName>
        <fullName evidence="1">Glycine--tRNA ligase alpha subunit</fullName>
        <ecNumber evidence="1">6.1.1.14</ecNumber>
    </recommendedName>
    <alternativeName>
        <fullName evidence="1">Glycyl-tRNA synthetase alpha subunit</fullName>
        <shortName evidence="1">GlyRS</shortName>
    </alternativeName>
</protein>
<organism>
    <name type="scientific">Escherichia coli O6:H1 (strain CFT073 / ATCC 700928 / UPEC)</name>
    <dbReference type="NCBI Taxonomy" id="199310"/>
    <lineage>
        <taxon>Bacteria</taxon>
        <taxon>Pseudomonadati</taxon>
        <taxon>Pseudomonadota</taxon>
        <taxon>Gammaproteobacteria</taxon>
        <taxon>Enterobacterales</taxon>
        <taxon>Enterobacteriaceae</taxon>
        <taxon>Escherichia</taxon>
    </lineage>
</organism>
<sequence>MQKFDTRTFQGLILTLQDYWARQGCTIVQPLDMEVGAGTSHPMTCLRALGPEPMAAAYVQPSRRPTDGRYGENPNRLQHYYQFQVVIKPSPDNIQELYLGSLKELGMDPTIHDIRFVEDNWENPTLGAWGLGWEVWLNGMEVTQFTYFQQVGGLECKPVTGEITYGLERLAMYIQGVDSVYDLVWSDGPLGKTTYGDVFHQNEVEQSTYNFEYADVDFLFTCFEQYEKEAQQLLALENPLPLPAYERILKAAHSFNLLDARKAISVTERQRYILRIRTLTKAVAEAYYASREALGFPMCNKDK</sequence>
<feature type="chain" id="PRO_0000072837" description="Glycine--tRNA ligase alpha subunit">
    <location>
        <begin position="1"/>
        <end position="303"/>
    </location>
</feature>
<gene>
    <name evidence="1" type="primary">glyQ</name>
    <name type="ordered locus">c4379</name>
</gene>
<keyword id="KW-0030">Aminoacyl-tRNA synthetase</keyword>
<keyword id="KW-0067">ATP-binding</keyword>
<keyword id="KW-0963">Cytoplasm</keyword>
<keyword id="KW-0436">Ligase</keyword>
<keyword id="KW-0547">Nucleotide-binding</keyword>
<keyword id="KW-0648">Protein biosynthesis</keyword>
<keyword id="KW-1185">Reference proteome</keyword>
<comment type="catalytic activity">
    <reaction evidence="1">
        <text>tRNA(Gly) + glycine + ATP = glycyl-tRNA(Gly) + AMP + diphosphate</text>
        <dbReference type="Rhea" id="RHEA:16013"/>
        <dbReference type="Rhea" id="RHEA-COMP:9664"/>
        <dbReference type="Rhea" id="RHEA-COMP:9683"/>
        <dbReference type="ChEBI" id="CHEBI:30616"/>
        <dbReference type="ChEBI" id="CHEBI:33019"/>
        <dbReference type="ChEBI" id="CHEBI:57305"/>
        <dbReference type="ChEBI" id="CHEBI:78442"/>
        <dbReference type="ChEBI" id="CHEBI:78522"/>
        <dbReference type="ChEBI" id="CHEBI:456215"/>
        <dbReference type="EC" id="6.1.1.14"/>
    </reaction>
</comment>
<comment type="subunit">
    <text evidence="1">Tetramer of two alpha and two beta subunits.</text>
</comment>
<comment type="subcellular location">
    <subcellularLocation>
        <location evidence="1">Cytoplasm</location>
    </subcellularLocation>
</comment>
<comment type="similarity">
    <text evidence="1">Belongs to the class-II aminoacyl-tRNA synthetase family.</text>
</comment>
<reference key="1">
    <citation type="journal article" date="2002" name="Proc. Natl. Acad. Sci. U.S.A.">
        <title>Extensive mosaic structure revealed by the complete genome sequence of uropathogenic Escherichia coli.</title>
        <authorList>
            <person name="Welch R.A."/>
            <person name="Burland V."/>
            <person name="Plunkett G. III"/>
            <person name="Redford P."/>
            <person name="Roesch P."/>
            <person name="Rasko D."/>
            <person name="Buckles E.L."/>
            <person name="Liou S.-R."/>
            <person name="Boutin A."/>
            <person name="Hackett J."/>
            <person name="Stroud D."/>
            <person name="Mayhew G.F."/>
            <person name="Rose D.J."/>
            <person name="Zhou S."/>
            <person name="Schwartz D.C."/>
            <person name="Perna N.T."/>
            <person name="Mobley H.L.T."/>
            <person name="Donnenberg M.S."/>
            <person name="Blattner F.R."/>
        </authorList>
    </citation>
    <scope>NUCLEOTIDE SEQUENCE [LARGE SCALE GENOMIC DNA]</scope>
    <source>
        <strain>CFT073 / ATCC 700928 / UPEC</strain>
    </source>
</reference>
<dbReference type="EC" id="6.1.1.14" evidence="1"/>
<dbReference type="EMBL" id="AE014075">
    <property type="protein sequence ID" value="AAN82815.1"/>
    <property type="molecule type" value="Genomic_DNA"/>
</dbReference>
<dbReference type="RefSeq" id="WP_001168544.1">
    <property type="nucleotide sequence ID" value="NZ_CP051263.1"/>
</dbReference>
<dbReference type="SMR" id="P67025"/>
<dbReference type="STRING" id="199310.c4379"/>
<dbReference type="GeneID" id="93778290"/>
<dbReference type="KEGG" id="ecc:c4379"/>
<dbReference type="eggNOG" id="COG0752">
    <property type="taxonomic scope" value="Bacteria"/>
</dbReference>
<dbReference type="HOGENOM" id="CLU_057066_1_0_6"/>
<dbReference type="BioCyc" id="ECOL199310:C4379-MONOMER"/>
<dbReference type="Proteomes" id="UP000001410">
    <property type="component" value="Chromosome"/>
</dbReference>
<dbReference type="GO" id="GO:0005829">
    <property type="term" value="C:cytosol"/>
    <property type="evidence" value="ECO:0007669"/>
    <property type="project" value="TreeGrafter"/>
</dbReference>
<dbReference type="GO" id="GO:0005524">
    <property type="term" value="F:ATP binding"/>
    <property type="evidence" value="ECO:0007669"/>
    <property type="project" value="UniProtKB-UniRule"/>
</dbReference>
<dbReference type="GO" id="GO:0004820">
    <property type="term" value="F:glycine-tRNA ligase activity"/>
    <property type="evidence" value="ECO:0007669"/>
    <property type="project" value="UniProtKB-UniRule"/>
</dbReference>
<dbReference type="GO" id="GO:0006426">
    <property type="term" value="P:glycyl-tRNA aminoacylation"/>
    <property type="evidence" value="ECO:0007669"/>
    <property type="project" value="UniProtKB-UniRule"/>
</dbReference>
<dbReference type="CDD" id="cd00733">
    <property type="entry name" value="GlyRS_alpha_core"/>
    <property type="match status" value="1"/>
</dbReference>
<dbReference type="FunFam" id="1.20.58.180:FF:000001">
    <property type="entry name" value="Glycine--tRNA ligase alpha subunit"/>
    <property type="match status" value="1"/>
</dbReference>
<dbReference type="FunFam" id="3.30.930.10:FF:000006">
    <property type="entry name" value="Glycine--tRNA ligase alpha subunit"/>
    <property type="match status" value="1"/>
</dbReference>
<dbReference type="Gene3D" id="3.30.930.10">
    <property type="entry name" value="Bira Bifunctional Protein, Domain 2"/>
    <property type="match status" value="1"/>
</dbReference>
<dbReference type="Gene3D" id="1.20.58.180">
    <property type="entry name" value="Class II aaRS and biotin synthetases, domain 2"/>
    <property type="match status" value="1"/>
</dbReference>
<dbReference type="HAMAP" id="MF_00254">
    <property type="entry name" value="Gly_tRNA_synth_alpha"/>
    <property type="match status" value="1"/>
</dbReference>
<dbReference type="InterPro" id="IPR045864">
    <property type="entry name" value="aa-tRNA-synth_II/BPL/LPL"/>
</dbReference>
<dbReference type="InterPro" id="IPR006194">
    <property type="entry name" value="Gly-tRNA-synth_heterodimer"/>
</dbReference>
<dbReference type="InterPro" id="IPR002310">
    <property type="entry name" value="Gly-tRNA_ligase_asu"/>
</dbReference>
<dbReference type="NCBIfam" id="TIGR00388">
    <property type="entry name" value="glyQ"/>
    <property type="match status" value="1"/>
</dbReference>
<dbReference type="NCBIfam" id="NF006827">
    <property type="entry name" value="PRK09348.1"/>
    <property type="match status" value="1"/>
</dbReference>
<dbReference type="PANTHER" id="PTHR30075:SF2">
    <property type="entry name" value="GLYCINE--TRNA LIGASE, CHLOROPLASTIC_MITOCHONDRIAL 2"/>
    <property type="match status" value="1"/>
</dbReference>
<dbReference type="PANTHER" id="PTHR30075">
    <property type="entry name" value="GLYCYL-TRNA SYNTHETASE"/>
    <property type="match status" value="1"/>
</dbReference>
<dbReference type="Pfam" id="PF02091">
    <property type="entry name" value="tRNA-synt_2e"/>
    <property type="match status" value="1"/>
</dbReference>
<dbReference type="PRINTS" id="PR01044">
    <property type="entry name" value="TRNASYNTHGA"/>
</dbReference>
<dbReference type="SUPFAM" id="SSF55681">
    <property type="entry name" value="Class II aaRS and biotin synthetases"/>
    <property type="match status" value="1"/>
</dbReference>
<dbReference type="PROSITE" id="PS50861">
    <property type="entry name" value="AA_TRNA_LIGASE_II_GLYAB"/>
    <property type="match status" value="1"/>
</dbReference>
<name>SYGA_ECOL6</name>
<proteinExistence type="inferred from homology"/>